<name>CDMG_TALVE</name>
<protein>
    <recommendedName>
        <fullName evidence="6">Terpene cyclase cdmG</fullName>
        <ecNumber evidence="5">4.2.3.-</ecNumber>
    </recommendedName>
    <alternativeName>
        <fullName evidence="6">chrodrimanin B biosynthesis cluster protein G</fullName>
    </alternativeName>
</protein>
<comment type="function">
    <text evidence="5 8">Terpene cyclase; part of the gene cluster that mediates the biosynthesis of chrodrimanin B, a meroterpenoid that acts as a potent blocker of insect GABA-gated chloride channels (PubMed:30417647). The first step of the pathway is the biosynthesis of 6-hydroxymellein by the polyketide synthase cdmE (PubMed:30417647). The prenyltransferase cdmH acts as a 6-hydroxymellein 5-farnesyltransferase and produces the hydrophobic metabolite verruculide C (PubMed:30417647). The FAD-dependent monooxygenase cdmI further converts verruculide C into verruculide B (PubMed:30417647). The terpene cyclase cdmG then produced the pentacyclic molecule 3-hydroxypentacecilide A, the backbone structure of chrodrimanin B, via folding the farnesyl moiety of the substrate into the chair-boat conformation (PubMed:30417647). The short-chain dehydrogenase/reductase cdmF functions as the 3-OH dehydrogenase that oxidizes the C-3 hydroxyl group of 3-hydroxypentacecilide A and produces chrodrimanin C, the dehydrogenated product of 3-hydroxypentacecilide A (PubMed:30417647). The cytochrome P450 monooxygenase cdmJ then accepts both 3-hydroxypentacecilide A and chrodrimanin C and functions as a C-7-beta-hydroxylase to produce respectively chrodrimanin H and chrodrimanin F (PubMed:30417647). The dioxygenase cdmA accepts chrodrimanin H to afford chrodrimanin E, which is further transformed to chrodrimanin A by the dioxygenase cdmD (PubMed:30417647). CdmA can also accept chrodrimanin C as substrate to convert it into verruculide A, which is further converted into chrodrimanin T by cdmD (PubMed:30417647). The last step of the biosynthesis is proposed to be performed by the acetyltransferase cdmC which acetylates chrodrimanin A to yield chrodrimanin B (Probable). The pathway may also lead to the production of additional shunt products, including chrodrimanins T and U (PubMed:30417647).</text>
</comment>
<comment type="catalytic activity">
    <reaction evidence="5">
        <text>verruculide C epoxide = 3-hydroxypentacecilide A</text>
        <dbReference type="Rhea" id="RHEA:65260"/>
        <dbReference type="ChEBI" id="CHEBI:156410"/>
        <dbReference type="ChEBI" id="CHEBI:156411"/>
    </reaction>
    <physiologicalReaction direction="left-to-right" evidence="5">
        <dbReference type="Rhea" id="RHEA:65261"/>
    </physiologicalReaction>
</comment>
<comment type="pathway">
    <text evidence="5">Secondary metabolite biosynthesis; terpenoid biosynthesis.</text>
</comment>
<comment type="subcellular location">
    <subcellularLocation>
        <location evidence="1">Membrane</location>
        <topology evidence="1">Multi-pass membrane protein</topology>
    </subcellularLocation>
</comment>
<comment type="biotechnology">
    <text evidence="3 4">Compounds in the chrodrimanin family such as chrodrimanin A or verruculide A exhibit strong inhibitory activities against protein tyrosine phosphatase 1B (PTP1B) and therefore, they could potentially be developed into drugs for the treatment of type 2 diabetes or obesity (PubMed:26115570). Furthermore, chrodrimanin B, the end product of the pathway involving chrodrimanin A or verruculide A, does not exhibit the PTP1B inhibitory activity, while it functions as a potent blocker of insect GABA-gated chloride channels (PubMed:25902139).</text>
</comment>
<comment type="similarity">
    <text evidence="7">Belongs to the paxB family.</text>
</comment>
<evidence type="ECO:0000255" key="1"/>
<evidence type="ECO:0000255" key="2">
    <source>
        <dbReference type="PROSITE-ProRule" id="PRU00498"/>
    </source>
</evidence>
<evidence type="ECO:0000269" key="3">
    <source>
    </source>
</evidence>
<evidence type="ECO:0000269" key="4">
    <source>
    </source>
</evidence>
<evidence type="ECO:0000269" key="5">
    <source>
    </source>
</evidence>
<evidence type="ECO:0000303" key="6">
    <source>
    </source>
</evidence>
<evidence type="ECO:0000305" key="7"/>
<evidence type="ECO:0000305" key="8">
    <source>
    </source>
</evidence>
<accession>A0A3G9H8P0</accession>
<feature type="chain" id="PRO_0000449132" description="Terpene cyclase cdmG">
    <location>
        <begin position="1"/>
        <end position="240"/>
    </location>
</feature>
<feature type="transmembrane region" description="Helical" evidence="1">
    <location>
        <begin position="16"/>
        <end position="36"/>
    </location>
</feature>
<feature type="transmembrane region" description="Helical" evidence="1">
    <location>
        <begin position="48"/>
        <end position="68"/>
    </location>
</feature>
<feature type="transmembrane region" description="Helical" evidence="1">
    <location>
        <begin position="78"/>
        <end position="98"/>
    </location>
</feature>
<feature type="transmembrane region" description="Helical" evidence="1">
    <location>
        <begin position="112"/>
        <end position="132"/>
    </location>
</feature>
<feature type="transmembrane region" description="Helical" evidence="1">
    <location>
        <begin position="134"/>
        <end position="154"/>
    </location>
</feature>
<feature type="transmembrane region" description="Helical" evidence="1">
    <location>
        <begin position="167"/>
        <end position="187"/>
    </location>
</feature>
<feature type="transmembrane region" description="Helical" evidence="1">
    <location>
        <begin position="205"/>
        <end position="225"/>
    </location>
</feature>
<feature type="glycosylation site" description="N-linked (GlcNAc...) asparagine" evidence="2">
    <location>
        <position position="197"/>
    </location>
</feature>
<gene>
    <name evidence="6" type="primary">cdmG</name>
</gene>
<organism>
    <name type="scientific">Talaromyces verruculosus</name>
    <name type="common">Penicillium verruculosum</name>
    <dbReference type="NCBI Taxonomy" id="198730"/>
    <lineage>
        <taxon>Eukaryota</taxon>
        <taxon>Fungi</taxon>
        <taxon>Dikarya</taxon>
        <taxon>Ascomycota</taxon>
        <taxon>Pezizomycotina</taxon>
        <taxon>Eurotiomycetes</taxon>
        <taxon>Eurotiomycetidae</taxon>
        <taxon>Eurotiales</taxon>
        <taxon>Trichocomaceae</taxon>
        <taxon>Talaromyces</taxon>
        <taxon>Talaromyces sect. Talaromyces</taxon>
    </lineage>
</organism>
<reference key="1">
    <citation type="journal article" date="2018" name="Org. Lett.">
        <title>Elucidation and heterologous reconstitution of chrodrimanin B biosynthesis.</title>
        <authorList>
            <person name="Bai T."/>
            <person name="Quan Z."/>
            <person name="Zhai R."/>
            <person name="Awakawa T."/>
            <person name="Matsuda Y."/>
            <person name="Abe I."/>
        </authorList>
    </citation>
    <scope>NUCLEOTIDE SEQUENCE [GENOMIC DNA]</scope>
    <scope>FUNCTION</scope>
    <scope>CATALYTIC ACTIVITY</scope>
    <scope>PATHWAY</scope>
    <source>
        <strain>TPU1311</strain>
    </source>
</reference>
<reference key="2">
    <citation type="journal article" date="2015" name="Bioorg. Med. Chem. Lett.">
        <title>Verruculides A and B, two new protein tyrosine phosphatase 1B inhibitors from an Indonesian ascidian-derived Penicillium verruculosum.</title>
        <authorList>
            <person name="Yamazaki H."/>
            <person name="Nakayama W."/>
            <person name="Takahashi O."/>
            <person name="Kirikoshi R."/>
            <person name="Izumikawa Y."/>
            <person name="Iwasaki K."/>
            <person name="Toraiwa K."/>
            <person name="Ukai K."/>
            <person name="Rotinsulu H."/>
            <person name="Wewengkang D.S."/>
            <person name="Sumilat D.A."/>
            <person name="Mangindaan R.E."/>
            <person name="Namikoshi M."/>
        </authorList>
    </citation>
    <scope>BIOTECHNOLOGY</scope>
</reference>
<reference key="3">
    <citation type="journal article" date="2015" name="PLoS ONE">
        <title>Meroterpenoid Chrodrimanins Are Selective and Potent Blockers of Insect GABA-Gated Chloride Channels.</title>
        <authorList>
            <person name="Xu Y."/>
            <person name="Furutani S."/>
            <person name="Ihara M."/>
            <person name="Ling Y."/>
            <person name="Yang X."/>
            <person name="Kai K."/>
            <person name="Hayashi H."/>
            <person name="Matsuda K."/>
        </authorList>
    </citation>
    <scope>BIOTECHNOLOGY</scope>
</reference>
<dbReference type="EC" id="4.2.3.-" evidence="5"/>
<dbReference type="EMBL" id="LC422696">
    <property type="protein sequence ID" value="BBG28486.1"/>
    <property type="molecule type" value="Genomic_DNA"/>
</dbReference>
<dbReference type="SMR" id="A0A3G9H8P0"/>
<dbReference type="GlyCosmos" id="A0A3G9H8P0">
    <property type="glycosylation" value="1 site, No reported glycans"/>
</dbReference>
<dbReference type="UniPathway" id="UPA00213"/>
<dbReference type="GO" id="GO:0016020">
    <property type="term" value="C:membrane"/>
    <property type="evidence" value="ECO:0007669"/>
    <property type="project" value="UniProtKB-SubCell"/>
</dbReference>
<dbReference type="GO" id="GO:0016829">
    <property type="term" value="F:lyase activity"/>
    <property type="evidence" value="ECO:0007669"/>
    <property type="project" value="UniProtKB-KW"/>
</dbReference>
<dbReference type="GO" id="GO:0016114">
    <property type="term" value="P:terpenoid biosynthetic process"/>
    <property type="evidence" value="ECO:0007669"/>
    <property type="project" value="UniProtKB-UniPathway"/>
</dbReference>
<dbReference type="InterPro" id="IPR039020">
    <property type="entry name" value="PaxB-like"/>
</dbReference>
<dbReference type="PANTHER" id="PTHR42038">
    <property type="match status" value="1"/>
</dbReference>
<dbReference type="PANTHER" id="PTHR42038:SF2">
    <property type="entry name" value="TERPENE CYCLASE AUSL"/>
    <property type="match status" value="1"/>
</dbReference>
<dbReference type="Pfam" id="PF25129">
    <property type="entry name" value="Pyr4-TMTC"/>
    <property type="match status" value="1"/>
</dbReference>
<keyword id="KW-0325">Glycoprotein</keyword>
<keyword id="KW-0456">Lyase</keyword>
<keyword id="KW-0472">Membrane</keyword>
<keyword id="KW-0812">Transmembrane</keyword>
<keyword id="KW-1133">Transmembrane helix</keyword>
<sequence>MDYFYGTSPPPEYERYASIVDAATLVQGFLWALNYGEASYRSIKDRTYGMAIFPLCCNYAWELVYTVIYSSQNKYERIIMTTWLILNSIMMGFTIKFAPNEWRHAPLVQRNIPFIFLAGVAAFVIAQLALAATVGPGLAMNWVAALCYLLLTIGSLCQLMTRGSSRGVSYTMWLSRFVGTYVGVICVYFRYNYWPQNFSWVDEPIMKCFSGISLAVEIVYGVTLWHIRKQERHHIVEKSK</sequence>
<proteinExistence type="evidence at protein level"/>